<keyword id="KW-0067">ATP-binding</keyword>
<keyword id="KW-0963">Cytoplasm</keyword>
<keyword id="KW-0436">Ligase</keyword>
<keyword id="KW-0547">Nucleotide-binding</keyword>
<keyword id="KW-0658">Purine biosynthesis</keyword>
<keyword id="KW-1185">Reference proteome</keyword>
<name>PUR5_SHISS</name>
<reference key="1">
    <citation type="journal article" date="2005" name="Nucleic Acids Res.">
        <title>Genome dynamics and diversity of Shigella species, the etiologic agents of bacillary dysentery.</title>
        <authorList>
            <person name="Yang F."/>
            <person name="Yang J."/>
            <person name="Zhang X."/>
            <person name="Chen L."/>
            <person name="Jiang Y."/>
            <person name="Yan Y."/>
            <person name="Tang X."/>
            <person name="Wang J."/>
            <person name="Xiong Z."/>
            <person name="Dong J."/>
            <person name="Xue Y."/>
            <person name="Zhu Y."/>
            <person name="Xu X."/>
            <person name="Sun L."/>
            <person name="Chen S."/>
            <person name="Nie H."/>
            <person name="Peng J."/>
            <person name="Xu J."/>
            <person name="Wang Y."/>
            <person name="Yuan Z."/>
            <person name="Wen Y."/>
            <person name="Yao Z."/>
            <person name="Shen Y."/>
            <person name="Qiang B."/>
            <person name="Hou Y."/>
            <person name="Yu J."/>
            <person name="Jin Q."/>
        </authorList>
    </citation>
    <scope>NUCLEOTIDE SEQUENCE [LARGE SCALE GENOMIC DNA]</scope>
    <source>
        <strain>Ss046</strain>
    </source>
</reference>
<gene>
    <name evidence="2" type="primary">purM</name>
    <name type="ordered locus">SSON_2581</name>
</gene>
<feature type="initiator methionine" description="Removed" evidence="1">
    <location>
        <position position="1"/>
    </location>
</feature>
<feature type="chain" id="PRO_0000258404" description="Phosphoribosylformylglycinamidine cyclo-ligase">
    <location>
        <begin position="2"/>
        <end position="345"/>
    </location>
</feature>
<organism>
    <name type="scientific">Shigella sonnei (strain Ss046)</name>
    <dbReference type="NCBI Taxonomy" id="300269"/>
    <lineage>
        <taxon>Bacteria</taxon>
        <taxon>Pseudomonadati</taxon>
        <taxon>Pseudomonadota</taxon>
        <taxon>Gammaproteobacteria</taxon>
        <taxon>Enterobacterales</taxon>
        <taxon>Enterobacteriaceae</taxon>
        <taxon>Shigella</taxon>
    </lineage>
</organism>
<comment type="catalytic activity">
    <reaction evidence="2">
        <text>2-formamido-N(1)-(5-O-phospho-beta-D-ribosyl)acetamidine + ATP = 5-amino-1-(5-phospho-beta-D-ribosyl)imidazole + ADP + phosphate + H(+)</text>
        <dbReference type="Rhea" id="RHEA:23032"/>
        <dbReference type="ChEBI" id="CHEBI:15378"/>
        <dbReference type="ChEBI" id="CHEBI:30616"/>
        <dbReference type="ChEBI" id="CHEBI:43474"/>
        <dbReference type="ChEBI" id="CHEBI:137981"/>
        <dbReference type="ChEBI" id="CHEBI:147287"/>
        <dbReference type="ChEBI" id="CHEBI:456216"/>
        <dbReference type="EC" id="6.3.3.1"/>
    </reaction>
</comment>
<comment type="pathway">
    <text evidence="2">Purine metabolism; IMP biosynthesis via de novo pathway; 5-amino-1-(5-phospho-D-ribosyl)imidazole from N(2)-formyl-N(1)-(5-phospho-D-ribosyl)glycinamide: step 2/2.</text>
</comment>
<comment type="subcellular location">
    <subcellularLocation>
        <location evidence="2">Cytoplasm</location>
    </subcellularLocation>
</comment>
<comment type="similarity">
    <text evidence="2">Belongs to the AIR synthase family.</text>
</comment>
<protein>
    <recommendedName>
        <fullName evidence="2">Phosphoribosylformylglycinamidine cyclo-ligase</fullName>
        <ecNumber evidence="2">6.3.3.1</ecNumber>
    </recommendedName>
    <alternativeName>
        <fullName evidence="2">AIR synthase</fullName>
    </alternativeName>
    <alternativeName>
        <fullName evidence="2">AIRS</fullName>
    </alternativeName>
    <alternativeName>
        <fullName evidence="2">Phosphoribosyl-aminoimidazole synthetase</fullName>
    </alternativeName>
</protein>
<evidence type="ECO:0000250" key="1"/>
<evidence type="ECO:0000255" key="2">
    <source>
        <dbReference type="HAMAP-Rule" id="MF_00741"/>
    </source>
</evidence>
<sequence length="345" mass="36873">MTDKTSLSYKDAGVDIDAGNALVGRIKGVVKKTRRPEVMGGLGGFGALCALPQKYREPVLVSGTDGVGTKLRLAMDLKRHDTIGIDLVAMCVNDLVVQGAEPLFFLDYYATGKLDVDTASAVISGIAEGCLQSGCSLVGGETAEMPGMYHGEDYDVAGFCVGVVEKSEIIDGSKVSDGDVLIALGSSGPHSNGYSLVRKILEVSGCDPQTTELDGKPLADHLLAPTRIYVKSVLELIEKVDVHAIAHLTGGGFWENIPRVLPDNTQAVIDESSWQWPEVFNWLQTAGNVERHEMYRTFNCGVGMIIALPAPEVDKALALLNANGENAWKIGIIKASDSEQRVVIE</sequence>
<dbReference type="EC" id="6.3.3.1" evidence="2"/>
<dbReference type="EMBL" id="CP000038">
    <property type="protein sequence ID" value="AAZ89209.1"/>
    <property type="molecule type" value="Genomic_DNA"/>
</dbReference>
<dbReference type="RefSeq" id="WP_001295474.1">
    <property type="nucleotide sequence ID" value="NC_007384.1"/>
</dbReference>
<dbReference type="SMR" id="Q3YZ53"/>
<dbReference type="GeneID" id="93774637"/>
<dbReference type="KEGG" id="ssn:SSON_2581"/>
<dbReference type="HOGENOM" id="CLU_047116_0_0_6"/>
<dbReference type="UniPathway" id="UPA00074">
    <property type="reaction ID" value="UER00129"/>
</dbReference>
<dbReference type="Proteomes" id="UP000002529">
    <property type="component" value="Chromosome"/>
</dbReference>
<dbReference type="GO" id="GO:0005829">
    <property type="term" value="C:cytosol"/>
    <property type="evidence" value="ECO:0007669"/>
    <property type="project" value="TreeGrafter"/>
</dbReference>
<dbReference type="GO" id="GO:0005524">
    <property type="term" value="F:ATP binding"/>
    <property type="evidence" value="ECO:0007669"/>
    <property type="project" value="UniProtKB-KW"/>
</dbReference>
<dbReference type="GO" id="GO:0004637">
    <property type="term" value="F:phosphoribosylamine-glycine ligase activity"/>
    <property type="evidence" value="ECO:0007669"/>
    <property type="project" value="TreeGrafter"/>
</dbReference>
<dbReference type="GO" id="GO:0004641">
    <property type="term" value="F:phosphoribosylformylglycinamidine cyclo-ligase activity"/>
    <property type="evidence" value="ECO:0007669"/>
    <property type="project" value="UniProtKB-UniRule"/>
</dbReference>
<dbReference type="GO" id="GO:0006189">
    <property type="term" value="P:'de novo' IMP biosynthetic process"/>
    <property type="evidence" value="ECO:0007669"/>
    <property type="project" value="UniProtKB-UniRule"/>
</dbReference>
<dbReference type="GO" id="GO:0046084">
    <property type="term" value="P:adenine biosynthetic process"/>
    <property type="evidence" value="ECO:0007669"/>
    <property type="project" value="TreeGrafter"/>
</dbReference>
<dbReference type="CDD" id="cd02196">
    <property type="entry name" value="PurM"/>
    <property type="match status" value="1"/>
</dbReference>
<dbReference type="FunFam" id="3.30.1330.10:FF:000001">
    <property type="entry name" value="Phosphoribosylformylglycinamidine cyclo-ligase"/>
    <property type="match status" value="1"/>
</dbReference>
<dbReference type="FunFam" id="3.90.650.10:FF:000001">
    <property type="entry name" value="Phosphoribosylformylglycinamidine cyclo-ligase"/>
    <property type="match status" value="1"/>
</dbReference>
<dbReference type="Gene3D" id="3.90.650.10">
    <property type="entry name" value="PurM-like C-terminal domain"/>
    <property type="match status" value="1"/>
</dbReference>
<dbReference type="Gene3D" id="3.30.1330.10">
    <property type="entry name" value="PurM-like, N-terminal domain"/>
    <property type="match status" value="1"/>
</dbReference>
<dbReference type="HAMAP" id="MF_00741">
    <property type="entry name" value="AIRS"/>
    <property type="match status" value="1"/>
</dbReference>
<dbReference type="InterPro" id="IPR010918">
    <property type="entry name" value="PurM-like_C_dom"/>
</dbReference>
<dbReference type="InterPro" id="IPR036676">
    <property type="entry name" value="PurM-like_C_sf"/>
</dbReference>
<dbReference type="InterPro" id="IPR016188">
    <property type="entry name" value="PurM-like_N"/>
</dbReference>
<dbReference type="InterPro" id="IPR036921">
    <property type="entry name" value="PurM-like_N_sf"/>
</dbReference>
<dbReference type="InterPro" id="IPR004733">
    <property type="entry name" value="PurM_cligase"/>
</dbReference>
<dbReference type="NCBIfam" id="TIGR00878">
    <property type="entry name" value="purM"/>
    <property type="match status" value="1"/>
</dbReference>
<dbReference type="PANTHER" id="PTHR10520:SF12">
    <property type="entry name" value="TRIFUNCTIONAL PURINE BIOSYNTHETIC PROTEIN ADENOSINE-3"/>
    <property type="match status" value="1"/>
</dbReference>
<dbReference type="PANTHER" id="PTHR10520">
    <property type="entry name" value="TRIFUNCTIONAL PURINE BIOSYNTHETIC PROTEIN ADENOSINE-3-RELATED"/>
    <property type="match status" value="1"/>
</dbReference>
<dbReference type="Pfam" id="PF00586">
    <property type="entry name" value="AIRS"/>
    <property type="match status" value="1"/>
</dbReference>
<dbReference type="Pfam" id="PF02769">
    <property type="entry name" value="AIRS_C"/>
    <property type="match status" value="1"/>
</dbReference>
<dbReference type="SUPFAM" id="SSF56042">
    <property type="entry name" value="PurM C-terminal domain-like"/>
    <property type="match status" value="1"/>
</dbReference>
<dbReference type="SUPFAM" id="SSF55326">
    <property type="entry name" value="PurM N-terminal domain-like"/>
    <property type="match status" value="1"/>
</dbReference>
<accession>Q3YZ53</accession>
<proteinExistence type="inferred from homology"/>